<accession>P35086</accession>
<accession>Q31LB3</accession>
<dbReference type="EMBL" id="U05044">
    <property type="protein sequence ID" value="AAA89102.1"/>
    <property type="molecule type" value="Genomic_DNA"/>
</dbReference>
<dbReference type="EMBL" id="CP000100">
    <property type="protein sequence ID" value="ABB58156.1"/>
    <property type="molecule type" value="Genomic_DNA"/>
</dbReference>
<dbReference type="RefSeq" id="WP_011244276.1">
    <property type="nucleotide sequence ID" value="NZ_JACJTX010000001.1"/>
</dbReference>
<dbReference type="PaxDb" id="1140-Synpcc7942_2126"/>
<dbReference type="KEGG" id="syf:Synpcc7942_2126"/>
<dbReference type="eggNOG" id="ENOG5030QCP">
    <property type="taxonomic scope" value="Bacteria"/>
</dbReference>
<dbReference type="HOGENOM" id="CLU_115813_2_0_3"/>
<dbReference type="OrthoDB" id="581999at2"/>
<dbReference type="BioCyc" id="SYNEL:SYNPCC7942_2126-MONOMER"/>
<dbReference type="Proteomes" id="UP000889800">
    <property type="component" value="Chromosome"/>
</dbReference>
<sequence length="134" mass="14314">MRYFFWSLLAIAAVLPISIAQAGSVRIEQAPNLQMSGMSGGGRASDCGYIGNRPSEQVTISPQYVEQSGYLRISVTAAGNPTLLIEGPSGRFCSVGQGGRNPQHVGVWPAGVYNIYVGDRQGQSHPYQLNLSGR</sequence>
<keyword id="KW-1185">Reference proteome</keyword>
<organism>
    <name type="scientific">Synechococcus elongatus (strain ATCC 33912 / PCC 7942 / FACHB-805)</name>
    <name type="common">Anacystis nidulans R2</name>
    <dbReference type="NCBI Taxonomy" id="1140"/>
    <lineage>
        <taxon>Bacteria</taxon>
        <taxon>Bacillati</taxon>
        <taxon>Cyanobacteriota</taxon>
        <taxon>Cyanophyceae</taxon>
        <taxon>Synechococcales</taxon>
        <taxon>Synechococcaceae</taxon>
        <taxon>Synechococcus</taxon>
    </lineage>
</organism>
<reference key="1">
    <citation type="thesis" date="1994" institute="University of Stanford" country="United States">
        <authorList>
            <person name="Collier J.L."/>
        </authorList>
    </citation>
    <scope>NUCLEOTIDE SEQUENCE [GENOMIC DNA]</scope>
</reference>
<reference key="2">
    <citation type="submission" date="2005-08" db="EMBL/GenBank/DDBJ databases">
        <title>Complete sequence of chromosome 1 of Synechococcus elongatus PCC 7942.</title>
        <authorList>
            <consortium name="US DOE Joint Genome Institute"/>
            <person name="Copeland A."/>
            <person name="Lucas S."/>
            <person name="Lapidus A."/>
            <person name="Barry K."/>
            <person name="Detter J.C."/>
            <person name="Glavina T."/>
            <person name="Hammon N."/>
            <person name="Israni S."/>
            <person name="Pitluck S."/>
            <person name="Schmutz J."/>
            <person name="Larimer F."/>
            <person name="Land M."/>
            <person name="Kyrpides N."/>
            <person name="Lykidis A."/>
            <person name="Golden S."/>
            <person name="Richardson P."/>
        </authorList>
    </citation>
    <scope>NUCLEOTIDE SEQUENCE [LARGE SCALE GENOMIC DNA]</scope>
    <source>
        <strain>ATCC 33912 / PCC 7942 / FACHB-805</strain>
    </source>
</reference>
<protein>
    <recommendedName>
        <fullName>Uncharacterized protein Synpcc7942_2126</fullName>
    </recommendedName>
    <alternativeName>
        <fullName>ORF134</fullName>
    </alternativeName>
</protein>
<name>Y2126_SYNE7</name>
<feature type="chain" id="PRO_0000066320" description="Uncharacterized protein Synpcc7942_2126">
    <location>
        <begin position="1"/>
        <end position="134"/>
    </location>
</feature>
<proteinExistence type="predicted"/>
<gene>
    <name type="ordered locus">Synpcc7942_2126</name>
</gene>